<protein>
    <recommendedName>
        <fullName evidence="1">Endoribonuclease YbeY</fullName>
        <ecNumber evidence="1">3.1.-.-</ecNumber>
    </recommendedName>
</protein>
<feature type="chain" id="PRO_1000199972" description="Endoribonuclease YbeY">
    <location>
        <begin position="1"/>
        <end position="155"/>
    </location>
</feature>
<feature type="binding site" evidence="1">
    <location>
        <position position="114"/>
    </location>
    <ligand>
        <name>Zn(2+)</name>
        <dbReference type="ChEBI" id="CHEBI:29105"/>
        <note>catalytic</note>
    </ligand>
</feature>
<feature type="binding site" evidence="1">
    <location>
        <position position="118"/>
    </location>
    <ligand>
        <name>Zn(2+)</name>
        <dbReference type="ChEBI" id="CHEBI:29105"/>
        <note>catalytic</note>
    </ligand>
</feature>
<feature type="binding site" evidence="1">
    <location>
        <position position="124"/>
    </location>
    <ligand>
        <name>Zn(2+)</name>
        <dbReference type="ChEBI" id="CHEBI:29105"/>
        <note>catalytic</note>
    </ligand>
</feature>
<keyword id="KW-0963">Cytoplasm</keyword>
<keyword id="KW-0255">Endonuclease</keyword>
<keyword id="KW-0378">Hydrolase</keyword>
<keyword id="KW-0479">Metal-binding</keyword>
<keyword id="KW-0540">Nuclease</keyword>
<keyword id="KW-1185">Reference proteome</keyword>
<keyword id="KW-0690">Ribosome biogenesis</keyword>
<keyword id="KW-0698">rRNA processing</keyword>
<keyword id="KW-0862">Zinc</keyword>
<name>YBEY_ECO27</name>
<gene>
    <name evidence="1" type="primary">ybeY</name>
    <name type="ordered locus">E2348C_0552</name>
</gene>
<proteinExistence type="inferred from homology"/>
<organism>
    <name type="scientific">Escherichia coli O127:H6 (strain E2348/69 / EPEC)</name>
    <dbReference type="NCBI Taxonomy" id="574521"/>
    <lineage>
        <taxon>Bacteria</taxon>
        <taxon>Pseudomonadati</taxon>
        <taxon>Pseudomonadota</taxon>
        <taxon>Gammaproteobacteria</taxon>
        <taxon>Enterobacterales</taxon>
        <taxon>Enterobacteriaceae</taxon>
        <taxon>Escherichia</taxon>
    </lineage>
</organism>
<reference key="1">
    <citation type="journal article" date="2009" name="J. Bacteriol.">
        <title>Complete genome sequence and comparative genome analysis of enteropathogenic Escherichia coli O127:H6 strain E2348/69.</title>
        <authorList>
            <person name="Iguchi A."/>
            <person name="Thomson N.R."/>
            <person name="Ogura Y."/>
            <person name="Saunders D."/>
            <person name="Ooka T."/>
            <person name="Henderson I.R."/>
            <person name="Harris D."/>
            <person name="Asadulghani M."/>
            <person name="Kurokawa K."/>
            <person name="Dean P."/>
            <person name="Kenny B."/>
            <person name="Quail M.A."/>
            <person name="Thurston S."/>
            <person name="Dougan G."/>
            <person name="Hayashi T."/>
            <person name="Parkhill J."/>
            <person name="Frankel G."/>
        </authorList>
    </citation>
    <scope>NUCLEOTIDE SEQUENCE [LARGE SCALE GENOMIC DNA]</scope>
    <source>
        <strain>E2348/69 / EPEC</strain>
    </source>
</reference>
<accession>B7UKU2</accession>
<dbReference type="EC" id="3.1.-.-" evidence="1"/>
<dbReference type="EMBL" id="FM180568">
    <property type="protein sequence ID" value="CAS08100.1"/>
    <property type="molecule type" value="Genomic_DNA"/>
</dbReference>
<dbReference type="RefSeq" id="WP_000084467.1">
    <property type="nucleotide sequence ID" value="NC_011601.1"/>
</dbReference>
<dbReference type="SMR" id="B7UKU2"/>
<dbReference type="KEGG" id="ecg:E2348C_0552"/>
<dbReference type="HOGENOM" id="CLU_106710_0_1_6"/>
<dbReference type="Proteomes" id="UP000008205">
    <property type="component" value="Chromosome"/>
</dbReference>
<dbReference type="GO" id="GO:0005737">
    <property type="term" value="C:cytoplasm"/>
    <property type="evidence" value="ECO:0007669"/>
    <property type="project" value="UniProtKB-SubCell"/>
</dbReference>
<dbReference type="GO" id="GO:0004222">
    <property type="term" value="F:metalloendopeptidase activity"/>
    <property type="evidence" value="ECO:0007669"/>
    <property type="project" value="InterPro"/>
</dbReference>
<dbReference type="GO" id="GO:0004521">
    <property type="term" value="F:RNA endonuclease activity"/>
    <property type="evidence" value="ECO:0007669"/>
    <property type="project" value="UniProtKB-UniRule"/>
</dbReference>
<dbReference type="GO" id="GO:0008270">
    <property type="term" value="F:zinc ion binding"/>
    <property type="evidence" value="ECO:0007669"/>
    <property type="project" value="UniProtKB-UniRule"/>
</dbReference>
<dbReference type="GO" id="GO:0006364">
    <property type="term" value="P:rRNA processing"/>
    <property type="evidence" value="ECO:0007669"/>
    <property type="project" value="UniProtKB-UniRule"/>
</dbReference>
<dbReference type="FunFam" id="3.40.390.30:FF:000001">
    <property type="entry name" value="Endoribonuclease YbeY"/>
    <property type="match status" value="1"/>
</dbReference>
<dbReference type="Gene3D" id="3.40.390.30">
    <property type="entry name" value="Metalloproteases ('zincins'), catalytic domain"/>
    <property type="match status" value="1"/>
</dbReference>
<dbReference type="HAMAP" id="MF_00009">
    <property type="entry name" value="Endoribonucl_YbeY"/>
    <property type="match status" value="1"/>
</dbReference>
<dbReference type="InterPro" id="IPR023091">
    <property type="entry name" value="MetalPrtase_cat_dom_sf_prd"/>
</dbReference>
<dbReference type="InterPro" id="IPR002036">
    <property type="entry name" value="YbeY"/>
</dbReference>
<dbReference type="InterPro" id="IPR020549">
    <property type="entry name" value="YbeY_CS"/>
</dbReference>
<dbReference type="NCBIfam" id="TIGR00043">
    <property type="entry name" value="rRNA maturation RNase YbeY"/>
    <property type="match status" value="1"/>
</dbReference>
<dbReference type="PANTHER" id="PTHR46986">
    <property type="entry name" value="ENDORIBONUCLEASE YBEY, CHLOROPLASTIC"/>
    <property type="match status" value="1"/>
</dbReference>
<dbReference type="PANTHER" id="PTHR46986:SF1">
    <property type="entry name" value="ENDORIBONUCLEASE YBEY, CHLOROPLASTIC"/>
    <property type="match status" value="1"/>
</dbReference>
<dbReference type="Pfam" id="PF02130">
    <property type="entry name" value="YbeY"/>
    <property type="match status" value="1"/>
</dbReference>
<dbReference type="SUPFAM" id="SSF55486">
    <property type="entry name" value="Metalloproteases ('zincins'), catalytic domain"/>
    <property type="match status" value="1"/>
</dbReference>
<dbReference type="PROSITE" id="PS01306">
    <property type="entry name" value="UPF0054"/>
    <property type="match status" value="1"/>
</dbReference>
<evidence type="ECO:0000255" key="1">
    <source>
        <dbReference type="HAMAP-Rule" id="MF_00009"/>
    </source>
</evidence>
<sequence>MSQVILDLQLACEDNSGLPEESQFQTWLNAVIPQFQEESEVTIRVVDTAESHSLNLTYRGKDKPTNVLSFPFEVPPGMEMSLLGDLVICRQVVEKEAQEQGKPLEAHWAHMVVHGSLHLLGYDHIEDDEAEEMEAIETEIMLALGYEDPYIAEKE</sequence>
<comment type="function">
    <text evidence="1">Single strand-specific metallo-endoribonuclease involved in late-stage 70S ribosome quality control and in maturation of the 3' terminus of the 16S rRNA.</text>
</comment>
<comment type="cofactor">
    <cofactor evidence="1">
        <name>Zn(2+)</name>
        <dbReference type="ChEBI" id="CHEBI:29105"/>
    </cofactor>
    <text evidence="1">Binds 1 zinc ion.</text>
</comment>
<comment type="subcellular location">
    <subcellularLocation>
        <location evidence="1">Cytoplasm</location>
    </subcellularLocation>
</comment>
<comment type="similarity">
    <text evidence="1">Belongs to the endoribonuclease YbeY family.</text>
</comment>